<sequence>MSVADTIARPYAQAIFEIAIENNTIEKWKNILIFIKTIASHKKFKNFLSGSISPKYLSLIFITIGTNIIDENAKNLIKLLSENQRFNILNNIFERFVKLEACYKNIIIVQLKSAFSLKENLINKIRKVLERFFLKKTKIIYKVDPNILNGMIVKVNNTIFDLSAQNHLKQLSDSLNF</sequence>
<name>ATPD_BUCAI</name>
<protein>
    <recommendedName>
        <fullName evidence="1">ATP synthase subunit delta</fullName>
    </recommendedName>
    <alternativeName>
        <fullName evidence="1">ATP synthase F(1) sector subunit delta</fullName>
    </alternativeName>
    <alternativeName>
        <fullName evidence="1">F-type ATPase subunit delta</fullName>
        <shortName evidence="1">F-ATPase subunit delta</shortName>
    </alternativeName>
</protein>
<accession>P57121</accession>
<evidence type="ECO:0000255" key="1">
    <source>
        <dbReference type="HAMAP-Rule" id="MF_01416"/>
    </source>
</evidence>
<gene>
    <name evidence="1" type="primary">atpH</name>
    <name type="ordered locus">BU005</name>
</gene>
<keyword id="KW-0066">ATP synthesis</keyword>
<keyword id="KW-1003">Cell membrane</keyword>
<keyword id="KW-0139">CF(1)</keyword>
<keyword id="KW-0375">Hydrogen ion transport</keyword>
<keyword id="KW-0406">Ion transport</keyword>
<keyword id="KW-0472">Membrane</keyword>
<keyword id="KW-1185">Reference proteome</keyword>
<keyword id="KW-0813">Transport</keyword>
<reference key="1">
    <citation type="journal article" date="2000" name="Nature">
        <title>Genome sequence of the endocellular bacterial symbiont of aphids Buchnera sp. APS.</title>
        <authorList>
            <person name="Shigenobu S."/>
            <person name="Watanabe H."/>
            <person name="Hattori M."/>
            <person name="Sakaki Y."/>
            <person name="Ishikawa H."/>
        </authorList>
    </citation>
    <scope>NUCLEOTIDE SEQUENCE [LARGE SCALE GENOMIC DNA]</scope>
    <source>
        <strain>APS</strain>
    </source>
</reference>
<dbReference type="EMBL" id="BA000003">
    <property type="protein sequence ID" value="BAB12733.1"/>
    <property type="molecule type" value="Genomic_DNA"/>
</dbReference>
<dbReference type="RefSeq" id="NP_239847.1">
    <property type="nucleotide sequence ID" value="NC_002528.1"/>
</dbReference>
<dbReference type="RefSeq" id="WP_010895899.1">
    <property type="nucleotide sequence ID" value="NC_002528.1"/>
</dbReference>
<dbReference type="SMR" id="P57121"/>
<dbReference type="STRING" id="563178.BUAP5A_005"/>
<dbReference type="EnsemblBacteria" id="BAB12733">
    <property type="protein sequence ID" value="BAB12733"/>
    <property type="gene ID" value="BAB12733"/>
</dbReference>
<dbReference type="KEGG" id="buc:BU005"/>
<dbReference type="PATRIC" id="fig|107806.10.peg.18"/>
<dbReference type="eggNOG" id="COG0712">
    <property type="taxonomic scope" value="Bacteria"/>
</dbReference>
<dbReference type="HOGENOM" id="CLU_085114_3_0_6"/>
<dbReference type="Proteomes" id="UP000001806">
    <property type="component" value="Chromosome"/>
</dbReference>
<dbReference type="GO" id="GO:0005886">
    <property type="term" value="C:plasma membrane"/>
    <property type="evidence" value="ECO:0007669"/>
    <property type="project" value="UniProtKB-SubCell"/>
</dbReference>
<dbReference type="GO" id="GO:0045259">
    <property type="term" value="C:proton-transporting ATP synthase complex"/>
    <property type="evidence" value="ECO:0007669"/>
    <property type="project" value="UniProtKB-KW"/>
</dbReference>
<dbReference type="GO" id="GO:0046933">
    <property type="term" value="F:proton-transporting ATP synthase activity, rotational mechanism"/>
    <property type="evidence" value="ECO:0007669"/>
    <property type="project" value="UniProtKB-UniRule"/>
</dbReference>
<dbReference type="Gene3D" id="1.10.520.20">
    <property type="entry name" value="N-terminal domain of the delta subunit of the F1F0-ATP synthase"/>
    <property type="match status" value="1"/>
</dbReference>
<dbReference type="HAMAP" id="MF_01416">
    <property type="entry name" value="ATP_synth_delta_bact"/>
    <property type="match status" value="1"/>
</dbReference>
<dbReference type="InterPro" id="IPR026015">
    <property type="entry name" value="ATP_synth_OSCP/delta_N_sf"/>
</dbReference>
<dbReference type="InterPro" id="IPR000711">
    <property type="entry name" value="ATPase_OSCP/dsu"/>
</dbReference>
<dbReference type="NCBIfam" id="TIGR01145">
    <property type="entry name" value="ATP_synt_delta"/>
    <property type="match status" value="1"/>
</dbReference>
<dbReference type="NCBIfam" id="NF004402">
    <property type="entry name" value="PRK05758.2-2"/>
    <property type="match status" value="1"/>
</dbReference>
<dbReference type="PANTHER" id="PTHR11910">
    <property type="entry name" value="ATP SYNTHASE DELTA CHAIN"/>
    <property type="match status" value="1"/>
</dbReference>
<dbReference type="Pfam" id="PF00213">
    <property type="entry name" value="OSCP"/>
    <property type="match status" value="1"/>
</dbReference>
<dbReference type="PRINTS" id="PR00125">
    <property type="entry name" value="ATPASEDELTA"/>
</dbReference>
<dbReference type="SUPFAM" id="SSF47928">
    <property type="entry name" value="N-terminal domain of the delta subunit of the F1F0-ATP synthase"/>
    <property type="match status" value="1"/>
</dbReference>
<organism>
    <name type="scientific">Buchnera aphidicola subsp. Acyrthosiphon pisum (strain APS)</name>
    <name type="common">Acyrthosiphon pisum symbiotic bacterium</name>
    <dbReference type="NCBI Taxonomy" id="107806"/>
    <lineage>
        <taxon>Bacteria</taxon>
        <taxon>Pseudomonadati</taxon>
        <taxon>Pseudomonadota</taxon>
        <taxon>Gammaproteobacteria</taxon>
        <taxon>Enterobacterales</taxon>
        <taxon>Erwiniaceae</taxon>
        <taxon>Buchnera</taxon>
    </lineage>
</organism>
<proteinExistence type="inferred from homology"/>
<feature type="chain" id="PRO_0000193459" description="ATP synthase subunit delta">
    <location>
        <begin position="1"/>
        <end position="177"/>
    </location>
</feature>
<comment type="function">
    <text evidence="1">F(1)F(0) ATP synthase produces ATP from ADP in the presence of a proton or sodium gradient. F-type ATPases consist of two structural domains, F(1) containing the extramembraneous catalytic core and F(0) containing the membrane proton channel, linked together by a central stalk and a peripheral stalk. During catalysis, ATP synthesis in the catalytic domain of F(1) is coupled via a rotary mechanism of the central stalk subunits to proton translocation.</text>
</comment>
<comment type="function">
    <text evidence="1">This protein is part of the stalk that links CF(0) to CF(1). It either transmits conformational changes from CF(0) to CF(1) or is implicated in proton conduction.</text>
</comment>
<comment type="subunit">
    <text evidence="1">F-type ATPases have 2 components, F(1) - the catalytic core - and F(0) - the membrane proton channel. F(1) has five subunits: alpha(3), beta(3), gamma(1), delta(1), epsilon(1). F(0) has three main subunits: a(1), b(2) and c(10-14). The alpha and beta chains form an alternating ring which encloses part of the gamma chain. F(1) is attached to F(0) by a central stalk formed by the gamma and epsilon chains, while a peripheral stalk is formed by the delta and b chains.</text>
</comment>
<comment type="subcellular location">
    <subcellularLocation>
        <location evidence="1">Cell membrane</location>
        <topology evidence="1">Peripheral membrane protein</topology>
    </subcellularLocation>
</comment>
<comment type="similarity">
    <text evidence="1">Belongs to the ATPase delta chain family.</text>
</comment>